<feature type="propeptide" id="PRO_0000397412" description="Removed in mature form; by autocatalysis" evidence="1">
    <location>
        <begin position="1"/>
        <end position="6"/>
    </location>
</feature>
<feature type="chain" id="PRO_0000397413" description="Proteasome subunit beta 1">
    <location>
        <begin position="7"/>
        <end position="197"/>
    </location>
</feature>
<feature type="active site" description="Nucleophile" evidence="1">
    <location>
        <position position="7"/>
    </location>
</feature>
<evidence type="ECO:0000255" key="1">
    <source>
        <dbReference type="HAMAP-Rule" id="MF_02113"/>
    </source>
</evidence>
<accession>O57983</accession>
<comment type="function">
    <text evidence="1">Component of the proteasome core, a large protease complex with broad specificity involved in protein degradation.</text>
</comment>
<comment type="catalytic activity">
    <reaction evidence="1">
        <text>Cleavage of peptide bonds with very broad specificity.</text>
        <dbReference type="EC" id="3.4.25.1"/>
    </reaction>
</comment>
<comment type="activity regulation">
    <text evidence="1">The formation of the proteasomal ATPase PAN-20S proteasome complex, via the docking of the C-termini of PAN into the intersubunit pockets in the alpha-rings, triggers opening of the gate for substrate entry. Interconversion between the open-gate and close-gate conformations leads to a dynamic regulation of the 20S proteasome proteolysis activity.</text>
</comment>
<comment type="subunit">
    <text evidence="1">The 20S proteasome core is composed of 14 alpha and 14 beta subunits that assemble into four stacked heptameric rings, resulting in a barrel-shaped structure. The two inner rings, each composed of seven catalytic beta subunits, are sandwiched by two outer rings, each composed of seven alpha subunits. The catalytic chamber with the active sites is on the inside of the barrel. Has a gated structure, the ends of the cylinder being occluded by the N-termini of the alpha-subunits. Is capped at one or both ends by the proteasome regulatory ATPase, PAN.</text>
</comment>
<comment type="subcellular location">
    <subcellularLocation>
        <location evidence="1">Cytoplasm</location>
    </subcellularLocation>
</comment>
<comment type="similarity">
    <text evidence="1">Belongs to the peptidase T1B family.</text>
</comment>
<organism>
    <name type="scientific">Pyrococcus horikoshii (strain ATCC 700860 / DSM 12428 / JCM 9974 / NBRC 100139 / OT-3)</name>
    <dbReference type="NCBI Taxonomy" id="70601"/>
    <lineage>
        <taxon>Archaea</taxon>
        <taxon>Methanobacteriati</taxon>
        <taxon>Methanobacteriota</taxon>
        <taxon>Thermococci</taxon>
        <taxon>Thermococcales</taxon>
        <taxon>Thermococcaceae</taxon>
        <taxon>Pyrococcus</taxon>
    </lineage>
</organism>
<proteinExistence type="inferred from homology"/>
<sequence length="197" mass="21611">MNRKTGTTTVGIKVKDGVILAADTQASLDHMVETLNIRKIIPITDRIAITTAGSVGDVQMIARILEAEARYYYFAWGRPMTTKAMANLLSNILNENKWFPYLVQIIIGGYVDEPTIANLDPYGGLIFDNYTATGSGTPFAIAILEEGYKENLGIEEAKELAIKAIKAAGSRDVYTGSKKVQVVTITKEGMQEEFIKL</sequence>
<reference key="1">
    <citation type="journal article" date="1998" name="DNA Res.">
        <title>Complete sequence and gene organization of the genome of a hyper-thermophilic archaebacterium, Pyrococcus horikoshii OT3.</title>
        <authorList>
            <person name="Kawarabayasi Y."/>
            <person name="Sawada M."/>
            <person name="Horikawa H."/>
            <person name="Haikawa Y."/>
            <person name="Hino Y."/>
            <person name="Yamamoto S."/>
            <person name="Sekine M."/>
            <person name="Baba S."/>
            <person name="Kosugi H."/>
            <person name="Hosoyama A."/>
            <person name="Nagai Y."/>
            <person name="Sakai M."/>
            <person name="Ogura K."/>
            <person name="Otsuka R."/>
            <person name="Nakazawa H."/>
            <person name="Takamiya M."/>
            <person name="Ohfuku Y."/>
            <person name="Funahashi T."/>
            <person name="Tanaka T."/>
            <person name="Kudoh Y."/>
            <person name="Yamazaki J."/>
            <person name="Kushida N."/>
            <person name="Oguchi A."/>
            <person name="Aoki K."/>
            <person name="Yoshizawa T."/>
            <person name="Nakamura Y."/>
            <person name="Robb F.T."/>
            <person name="Horikoshi K."/>
            <person name="Masuchi Y."/>
            <person name="Shizuya H."/>
            <person name="Kikuchi H."/>
        </authorList>
    </citation>
    <scope>NUCLEOTIDE SEQUENCE [LARGE SCALE GENOMIC DNA]</scope>
    <source>
        <strain>ATCC 700860 / DSM 12428 / JCM 9974 / NBRC 100139 / OT-3</strain>
    </source>
</reference>
<keyword id="KW-0068">Autocatalytic cleavage</keyword>
<keyword id="KW-0963">Cytoplasm</keyword>
<keyword id="KW-0378">Hydrolase</keyword>
<keyword id="KW-0645">Protease</keyword>
<keyword id="KW-0647">Proteasome</keyword>
<keyword id="KW-0888">Threonine protease</keyword>
<keyword id="KW-0865">Zymogen</keyword>
<gene>
    <name evidence="1" type="primary">psmB1</name>
    <name type="ordered locus">PH0245</name>
</gene>
<protein>
    <recommendedName>
        <fullName evidence="1">Proteasome subunit beta 1</fullName>
        <ecNumber evidence="1">3.4.25.1</ecNumber>
    </recommendedName>
    <alternativeName>
        <fullName evidence="1">20S proteasome beta subunit 1</fullName>
    </alternativeName>
    <alternativeName>
        <fullName evidence="1">Proteasome core protein PsmB 1</fullName>
    </alternativeName>
</protein>
<name>PSB1_PYRHO</name>
<dbReference type="EC" id="3.4.25.1" evidence="1"/>
<dbReference type="EMBL" id="BA000001">
    <property type="protein sequence ID" value="BAA29317.1"/>
    <property type="molecule type" value="Genomic_DNA"/>
</dbReference>
<dbReference type="PIR" id="F71248">
    <property type="entry name" value="F71248"/>
</dbReference>
<dbReference type="RefSeq" id="WP_010884348.1">
    <property type="nucleotide sequence ID" value="NC_000961.1"/>
</dbReference>
<dbReference type="SMR" id="O57983"/>
<dbReference type="IntAct" id="O57983">
    <property type="interactions" value="1"/>
</dbReference>
<dbReference type="MINT" id="O57983"/>
<dbReference type="STRING" id="70601.gene:9377161"/>
<dbReference type="MEROPS" id="T01.002"/>
<dbReference type="EnsemblBacteria" id="BAA29317">
    <property type="protein sequence ID" value="BAA29317"/>
    <property type="gene ID" value="BAA29317"/>
</dbReference>
<dbReference type="GeneID" id="1444135"/>
<dbReference type="KEGG" id="pho:PH0245"/>
<dbReference type="eggNOG" id="arCOG00970">
    <property type="taxonomic scope" value="Archaea"/>
</dbReference>
<dbReference type="OrthoDB" id="6330at2157"/>
<dbReference type="Proteomes" id="UP000000752">
    <property type="component" value="Chromosome"/>
</dbReference>
<dbReference type="GO" id="GO:0005737">
    <property type="term" value="C:cytoplasm"/>
    <property type="evidence" value="ECO:0007669"/>
    <property type="project" value="UniProtKB-SubCell"/>
</dbReference>
<dbReference type="GO" id="GO:0019774">
    <property type="term" value="C:proteasome core complex, beta-subunit complex"/>
    <property type="evidence" value="ECO:0007669"/>
    <property type="project" value="UniProtKB-UniRule"/>
</dbReference>
<dbReference type="GO" id="GO:0004298">
    <property type="term" value="F:threonine-type endopeptidase activity"/>
    <property type="evidence" value="ECO:0007669"/>
    <property type="project" value="UniProtKB-UniRule"/>
</dbReference>
<dbReference type="GO" id="GO:0010498">
    <property type="term" value="P:proteasomal protein catabolic process"/>
    <property type="evidence" value="ECO:0007669"/>
    <property type="project" value="UniProtKB-UniRule"/>
</dbReference>
<dbReference type="CDD" id="cd03764">
    <property type="entry name" value="proteasome_beta_archeal"/>
    <property type="match status" value="1"/>
</dbReference>
<dbReference type="Gene3D" id="3.60.20.10">
    <property type="entry name" value="Glutamine Phosphoribosylpyrophosphate, subunit 1, domain 1"/>
    <property type="match status" value="1"/>
</dbReference>
<dbReference type="HAMAP" id="MF_02113_A">
    <property type="entry name" value="Proteasome_B_A"/>
    <property type="match status" value="1"/>
</dbReference>
<dbReference type="InterPro" id="IPR029055">
    <property type="entry name" value="Ntn_hydrolases_N"/>
</dbReference>
<dbReference type="InterPro" id="IPR019983">
    <property type="entry name" value="Pept_T1A_Psome_bsu_arc"/>
</dbReference>
<dbReference type="InterPro" id="IPR000243">
    <property type="entry name" value="Pept_T1A_subB"/>
</dbReference>
<dbReference type="InterPro" id="IPR016050">
    <property type="entry name" value="Proteasome_bsu_CS"/>
</dbReference>
<dbReference type="InterPro" id="IPR001353">
    <property type="entry name" value="Proteasome_sua/b"/>
</dbReference>
<dbReference type="InterPro" id="IPR023333">
    <property type="entry name" value="Proteasome_suB-type"/>
</dbReference>
<dbReference type="NCBIfam" id="TIGR03634">
    <property type="entry name" value="arc_protsome_B"/>
    <property type="match status" value="1"/>
</dbReference>
<dbReference type="PANTHER" id="PTHR32194:SF0">
    <property type="entry name" value="ATP-DEPENDENT PROTEASE SUBUNIT HSLV"/>
    <property type="match status" value="1"/>
</dbReference>
<dbReference type="PANTHER" id="PTHR32194">
    <property type="entry name" value="METALLOPROTEASE TLDD"/>
    <property type="match status" value="1"/>
</dbReference>
<dbReference type="Pfam" id="PF00227">
    <property type="entry name" value="Proteasome"/>
    <property type="match status" value="1"/>
</dbReference>
<dbReference type="PRINTS" id="PR00141">
    <property type="entry name" value="PROTEASOME"/>
</dbReference>
<dbReference type="SUPFAM" id="SSF56235">
    <property type="entry name" value="N-terminal nucleophile aminohydrolases (Ntn hydrolases)"/>
    <property type="match status" value="1"/>
</dbReference>
<dbReference type="PROSITE" id="PS00854">
    <property type="entry name" value="PROTEASOME_BETA_1"/>
    <property type="match status" value="1"/>
</dbReference>
<dbReference type="PROSITE" id="PS51476">
    <property type="entry name" value="PROTEASOME_BETA_2"/>
    <property type="match status" value="1"/>
</dbReference>